<feature type="chain" id="PRO_1000136585" description="UPF0259 membrane protein YciC">
    <location>
        <begin position="1"/>
        <end position="247"/>
    </location>
</feature>
<feature type="transmembrane region" description="Helical" evidence="1">
    <location>
        <begin position="20"/>
        <end position="40"/>
    </location>
</feature>
<feature type="transmembrane region" description="Helical" evidence="1">
    <location>
        <begin position="87"/>
        <end position="107"/>
    </location>
</feature>
<feature type="transmembrane region" description="Helical" evidence="1">
    <location>
        <begin position="118"/>
        <end position="140"/>
    </location>
</feature>
<feature type="transmembrane region" description="Helical" evidence="1">
    <location>
        <begin position="152"/>
        <end position="172"/>
    </location>
</feature>
<feature type="transmembrane region" description="Helical" evidence="1">
    <location>
        <begin position="187"/>
        <end position="209"/>
    </location>
</feature>
<feature type="transmembrane region" description="Helical" evidence="1">
    <location>
        <begin position="225"/>
        <end position="245"/>
    </location>
</feature>
<dbReference type="EMBL" id="CP000970">
    <property type="protein sequence ID" value="ACB20212.1"/>
    <property type="molecule type" value="Genomic_DNA"/>
</dbReference>
<dbReference type="RefSeq" id="WP_000028541.1">
    <property type="nucleotide sequence ID" value="NC_010498.1"/>
</dbReference>
<dbReference type="KEGG" id="ecm:EcSMS35_1877"/>
<dbReference type="HOGENOM" id="CLU_073287_0_0_6"/>
<dbReference type="Proteomes" id="UP000007011">
    <property type="component" value="Chromosome"/>
</dbReference>
<dbReference type="GO" id="GO:0005886">
    <property type="term" value="C:plasma membrane"/>
    <property type="evidence" value="ECO:0007669"/>
    <property type="project" value="UniProtKB-SubCell"/>
</dbReference>
<dbReference type="HAMAP" id="MF_01067">
    <property type="entry name" value="UPF0259"/>
    <property type="match status" value="1"/>
</dbReference>
<dbReference type="InterPro" id="IPR009627">
    <property type="entry name" value="UPF0259"/>
</dbReference>
<dbReference type="NCBIfam" id="NF002774">
    <property type="entry name" value="PRK02868.1"/>
    <property type="match status" value="1"/>
</dbReference>
<dbReference type="Pfam" id="PF06790">
    <property type="entry name" value="UPF0259"/>
    <property type="match status" value="1"/>
</dbReference>
<keyword id="KW-0997">Cell inner membrane</keyword>
<keyword id="KW-1003">Cell membrane</keyword>
<keyword id="KW-0472">Membrane</keyword>
<keyword id="KW-0812">Transmembrane</keyword>
<keyword id="KW-1133">Transmembrane helix</keyword>
<evidence type="ECO:0000255" key="1">
    <source>
        <dbReference type="HAMAP-Rule" id="MF_01067"/>
    </source>
</evidence>
<name>YCIC_ECOSM</name>
<accession>B1LH37</accession>
<proteinExistence type="inferred from homology"/>
<reference key="1">
    <citation type="journal article" date="2008" name="J. Bacteriol.">
        <title>Insights into the environmental resistance gene pool from the genome sequence of the multidrug-resistant environmental isolate Escherichia coli SMS-3-5.</title>
        <authorList>
            <person name="Fricke W.F."/>
            <person name="Wright M.S."/>
            <person name="Lindell A.H."/>
            <person name="Harkins D.M."/>
            <person name="Baker-Austin C."/>
            <person name="Ravel J."/>
            <person name="Stepanauskas R."/>
        </authorList>
    </citation>
    <scope>NUCLEOTIDE SEQUENCE [LARGE SCALE GENOMIC DNA]</scope>
    <source>
        <strain>SMS-3-5 / SECEC</strain>
    </source>
</reference>
<protein>
    <recommendedName>
        <fullName evidence="1">UPF0259 membrane protein YciC</fullName>
    </recommendedName>
</protein>
<gene>
    <name evidence="1" type="primary">yciC</name>
    <name type="ordered locus">EcSMS35_1877</name>
</gene>
<sequence>MSITAQSVYRDTGNFFRNQFMTILLVSLLCAFITVVLGHVFSPSDAQLAQLNDGVPVSGSSGLFDLVQNMSPEQQQILLQASAASTFSGLIGNAILAGGVILIIQLVSAGQRVSALRAIGASAPILPKLFILIFLTTLLVQIGIMLVVVPGIIMAILLALAPVMLVQDKMGIFASMRSSMRLTWANMRLVAPAVLSWLLAKTLLLLFASSFAALTPEIGAVLANTLSNLISAVLLIYLFRLYMLIRQ</sequence>
<organism>
    <name type="scientific">Escherichia coli (strain SMS-3-5 / SECEC)</name>
    <dbReference type="NCBI Taxonomy" id="439855"/>
    <lineage>
        <taxon>Bacteria</taxon>
        <taxon>Pseudomonadati</taxon>
        <taxon>Pseudomonadota</taxon>
        <taxon>Gammaproteobacteria</taxon>
        <taxon>Enterobacterales</taxon>
        <taxon>Enterobacteriaceae</taxon>
        <taxon>Escherichia</taxon>
    </lineage>
</organism>
<comment type="subcellular location">
    <subcellularLocation>
        <location evidence="1">Cell inner membrane</location>
        <topology evidence="1">Multi-pass membrane protein</topology>
    </subcellularLocation>
</comment>
<comment type="similarity">
    <text evidence="1">Belongs to the UPF0259 family.</text>
</comment>